<gene>
    <name evidence="1" type="primary">csrA</name>
    <name type="ordered locus">HPP12_1420</name>
</gene>
<evidence type="ECO:0000255" key="1">
    <source>
        <dbReference type="HAMAP-Rule" id="MF_00167"/>
    </source>
</evidence>
<organism>
    <name type="scientific">Helicobacter pylori (strain P12)</name>
    <dbReference type="NCBI Taxonomy" id="570508"/>
    <lineage>
        <taxon>Bacteria</taxon>
        <taxon>Pseudomonadati</taxon>
        <taxon>Campylobacterota</taxon>
        <taxon>Epsilonproteobacteria</taxon>
        <taxon>Campylobacterales</taxon>
        <taxon>Helicobacteraceae</taxon>
        <taxon>Helicobacter</taxon>
    </lineage>
</organism>
<sequence length="76" mass="8396">MLILSRKVNEGIVIDDNIHIKVISIDRGSVRLGFEAPESTLILRAELKEAIVSENQKASASVDESLLENIKKVIKP</sequence>
<dbReference type="EMBL" id="CP001217">
    <property type="protein sequence ID" value="ACJ08568.1"/>
    <property type="molecule type" value="Genomic_DNA"/>
</dbReference>
<dbReference type="BMRB" id="B6JNU0"/>
<dbReference type="SMR" id="B6JNU0"/>
<dbReference type="KEGG" id="hpp:HPP12_1420"/>
<dbReference type="HOGENOM" id="CLU_164837_0_0_7"/>
<dbReference type="Proteomes" id="UP000008198">
    <property type="component" value="Chromosome"/>
</dbReference>
<dbReference type="GO" id="GO:0005829">
    <property type="term" value="C:cytosol"/>
    <property type="evidence" value="ECO:0007669"/>
    <property type="project" value="TreeGrafter"/>
</dbReference>
<dbReference type="GO" id="GO:0048027">
    <property type="term" value="F:mRNA 5'-UTR binding"/>
    <property type="evidence" value="ECO:0007669"/>
    <property type="project" value="UniProtKB-UniRule"/>
</dbReference>
<dbReference type="GO" id="GO:0044781">
    <property type="term" value="P:bacterial-type flagellum organization"/>
    <property type="evidence" value="ECO:0007669"/>
    <property type="project" value="UniProtKB-KW"/>
</dbReference>
<dbReference type="GO" id="GO:0006402">
    <property type="term" value="P:mRNA catabolic process"/>
    <property type="evidence" value="ECO:0007669"/>
    <property type="project" value="InterPro"/>
</dbReference>
<dbReference type="GO" id="GO:0045947">
    <property type="term" value="P:negative regulation of translational initiation"/>
    <property type="evidence" value="ECO:0007669"/>
    <property type="project" value="UniProtKB-UniRule"/>
</dbReference>
<dbReference type="GO" id="GO:1902208">
    <property type="term" value="P:regulation of bacterial-type flagellum assembly"/>
    <property type="evidence" value="ECO:0007669"/>
    <property type="project" value="UniProtKB-UniRule"/>
</dbReference>
<dbReference type="GO" id="GO:0006109">
    <property type="term" value="P:regulation of carbohydrate metabolic process"/>
    <property type="evidence" value="ECO:0007669"/>
    <property type="project" value="InterPro"/>
</dbReference>
<dbReference type="FunFam" id="2.60.40.4380:FF:000002">
    <property type="entry name" value="Translational regulator CsrA"/>
    <property type="match status" value="1"/>
</dbReference>
<dbReference type="Gene3D" id="2.60.40.4380">
    <property type="entry name" value="Translational regulator CsrA"/>
    <property type="match status" value="1"/>
</dbReference>
<dbReference type="HAMAP" id="MF_00167">
    <property type="entry name" value="CsrA"/>
    <property type="match status" value="1"/>
</dbReference>
<dbReference type="InterPro" id="IPR003751">
    <property type="entry name" value="CsrA"/>
</dbReference>
<dbReference type="InterPro" id="IPR036107">
    <property type="entry name" value="CsrA_sf"/>
</dbReference>
<dbReference type="NCBIfam" id="TIGR00202">
    <property type="entry name" value="csrA"/>
    <property type="match status" value="1"/>
</dbReference>
<dbReference type="NCBIfam" id="NF001844">
    <property type="entry name" value="PRK00568.1"/>
    <property type="match status" value="1"/>
</dbReference>
<dbReference type="PANTHER" id="PTHR34984">
    <property type="entry name" value="CARBON STORAGE REGULATOR"/>
    <property type="match status" value="1"/>
</dbReference>
<dbReference type="PANTHER" id="PTHR34984:SF1">
    <property type="entry name" value="CARBON STORAGE REGULATOR"/>
    <property type="match status" value="1"/>
</dbReference>
<dbReference type="Pfam" id="PF02599">
    <property type="entry name" value="CsrA"/>
    <property type="match status" value="1"/>
</dbReference>
<dbReference type="SUPFAM" id="SSF117130">
    <property type="entry name" value="CsrA-like"/>
    <property type="match status" value="1"/>
</dbReference>
<keyword id="KW-1005">Bacterial flagellum biogenesis</keyword>
<keyword id="KW-0963">Cytoplasm</keyword>
<keyword id="KW-0678">Repressor</keyword>
<keyword id="KW-0694">RNA-binding</keyword>
<keyword id="KW-0810">Translation regulation</keyword>
<accession>B6JNU0</accession>
<comment type="function">
    <text evidence="1">A translational regulator that binds mRNA to regulate translation initiation and/or mRNA stability. Usually binds in the 5'-UTR at or near the Shine-Dalgarno sequence preventing ribosome-binding, thus repressing translation. Its main target seems to be the major flagellin gene, while its function is anatagonized by FliW.</text>
</comment>
<comment type="subunit">
    <text evidence="1">Homodimer; the beta-strands of each monomer intercalate to form a hydrophobic core, while the alpha-helices form wings that extend away from the core.</text>
</comment>
<comment type="subcellular location">
    <subcellularLocation>
        <location evidence="1">Cytoplasm</location>
    </subcellularLocation>
</comment>
<comment type="similarity">
    <text evidence="1">Belongs to the CsrA/RsmA family.</text>
</comment>
<protein>
    <recommendedName>
        <fullName evidence="1">Translational regulator CsrA</fullName>
    </recommendedName>
</protein>
<reference key="1">
    <citation type="submission" date="2008-10" db="EMBL/GenBank/DDBJ databases">
        <title>The complete genome sequence of Helicobacter pylori strain P12.</title>
        <authorList>
            <person name="Fischer W."/>
            <person name="Windhager L."/>
            <person name="Karnholz A."/>
            <person name="Zeiller M."/>
            <person name="Zimmer R."/>
            <person name="Haas R."/>
        </authorList>
    </citation>
    <scope>NUCLEOTIDE SEQUENCE [LARGE SCALE GENOMIC DNA]</scope>
    <source>
        <strain>P12</strain>
    </source>
</reference>
<feature type="chain" id="PRO_1000097493" description="Translational regulator CsrA">
    <location>
        <begin position="1"/>
        <end position="76"/>
    </location>
</feature>
<proteinExistence type="inferred from homology"/>
<name>CSRA_HELP2</name>